<comment type="function">
    <text evidence="1">Catalyzes the strictly specific dephosphorylation of 2'-deoxyribonucleoside 5'-monophosphates.</text>
</comment>
<comment type="catalytic activity">
    <reaction evidence="1">
        <text>a 2'-deoxyribonucleoside 5'-phosphate + H2O = a 2'-deoxyribonucleoside + phosphate</text>
        <dbReference type="Rhea" id="RHEA:36167"/>
        <dbReference type="ChEBI" id="CHEBI:15377"/>
        <dbReference type="ChEBI" id="CHEBI:18274"/>
        <dbReference type="ChEBI" id="CHEBI:43474"/>
        <dbReference type="ChEBI" id="CHEBI:65317"/>
        <dbReference type="EC" id="3.1.3.89"/>
    </reaction>
</comment>
<comment type="cofactor">
    <cofactor evidence="1">
        <name>a divalent metal cation</name>
        <dbReference type="ChEBI" id="CHEBI:60240"/>
    </cofactor>
</comment>
<comment type="subunit">
    <text evidence="1">Homodimer.</text>
</comment>
<comment type="subcellular location">
    <subcellularLocation>
        <location evidence="1">Cytoplasm</location>
    </subcellularLocation>
</comment>
<comment type="similarity">
    <text evidence="1">Belongs to the 5DNU family.</text>
</comment>
<accession>B7LBE5</accession>
<sequence>MKQSHFFAHLSRLKLINRWPLMRNVRTENVSEHSLQVAMVAHALAAIKNRKFGGNVNAERIALLAMYHDASEVLTGDLPTPVKYFNSQIAQEYKAIEKIAQQKLVDMVPEELRDIFAPLIDEHAYSDEEKSLVKQADALCAYLKCLEELAAGNNEFLLAKTRLEATLEARRSQEMDYFMEVFVPSFHLSLDEISQDSPL</sequence>
<evidence type="ECO:0000255" key="1">
    <source>
        <dbReference type="HAMAP-Rule" id="MF_01100"/>
    </source>
</evidence>
<evidence type="ECO:0000255" key="2">
    <source>
        <dbReference type="PROSITE-ProRule" id="PRU01175"/>
    </source>
</evidence>
<protein>
    <recommendedName>
        <fullName evidence="1">5'-deoxynucleotidase YfbR</fullName>
        <ecNumber evidence="1">3.1.3.89</ecNumber>
    </recommendedName>
    <alternativeName>
        <fullName evidence="1">5'-deoxyribonucleotidase</fullName>
    </alternativeName>
    <alternativeName>
        <fullName evidence="1">Nucleoside 5'-monophosphate phosphohydrolase</fullName>
    </alternativeName>
</protein>
<reference key="1">
    <citation type="journal article" date="2009" name="PLoS Genet.">
        <title>Organised genome dynamics in the Escherichia coli species results in highly diverse adaptive paths.</title>
        <authorList>
            <person name="Touchon M."/>
            <person name="Hoede C."/>
            <person name="Tenaillon O."/>
            <person name="Barbe V."/>
            <person name="Baeriswyl S."/>
            <person name="Bidet P."/>
            <person name="Bingen E."/>
            <person name="Bonacorsi S."/>
            <person name="Bouchier C."/>
            <person name="Bouvet O."/>
            <person name="Calteau A."/>
            <person name="Chiapello H."/>
            <person name="Clermont O."/>
            <person name="Cruveiller S."/>
            <person name="Danchin A."/>
            <person name="Diard M."/>
            <person name="Dossat C."/>
            <person name="Karoui M.E."/>
            <person name="Frapy E."/>
            <person name="Garry L."/>
            <person name="Ghigo J.M."/>
            <person name="Gilles A.M."/>
            <person name="Johnson J."/>
            <person name="Le Bouguenec C."/>
            <person name="Lescat M."/>
            <person name="Mangenot S."/>
            <person name="Martinez-Jehanne V."/>
            <person name="Matic I."/>
            <person name="Nassif X."/>
            <person name="Oztas S."/>
            <person name="Petit M.A."/>
            <person name="Pichon C."/>
            <person name="Rouy Z."/>
            <person name="Ruf C.S."/>
            <person name="Schneider D."/>
            <person name="Tourret J."/>
            <person name="Vacherie B."/>
            <person name="Vallenet D."/>
            <person name="Medigue C."/>
            <person name="Rocha E.P.C."/>
            <person name="Denamur E."/>
        </authorList>
    </citation>
    <scope>NUCLEOTIDE SEQUENCE [LARGE SCALE GENOMIC DNA]</scope>
    <source>
        <strain>55989 / EAEC</strain>
    </source>
</reference>
<gene>
    <name evidence="1" type="primary">yfbR</name>
    <name type="ordered locus">EC55989_2535</name>
</gene>
<keyword id="KW-0963">Cytoplasm</keyword>
<keyword id="KW-0378">Hydrolase</keyword>
<keyword id="KW-0479">Metal-binding</keyword>
<keyword id="KW-0547">Nucleotide-binding</keyword>
<keyword id="KW-1185">Reference proteome</keyword>
<proteinExistence type="inferred from homology"/>
<dbReference type="EC" id="3.1.3.89" evidence="1"/>
<dbReference type="EMBL" id="CU928145">
    <property type="protein sequence ID" value="CAU98403.1"/>
    <property type="molecule type" value="Genomic_DNA"/>
</dbReference>
<dbReference type="RefSeq" id="WP_000813860.1">
    <property type="nucleotide sequence ID" value="NC_011748.1"/>
</dbReference>
<dbReference type="SMR" id="B7LBE5"/>
<dbReference type="GeneID" id="93774883"/>
<dbReference type="KEGG" id="eck:EC55989_2535"/>
<dbReference type="HOGENOM" id="CLU_084784_0_0_6"/>
<dbReference type="Proteomes" id="UP000000746">
    <property type="component" value="Chromosome"/>
</dbReference>
<dbReference type="GO" id="GO:0005737">
    <property type="term" value="C:cytoplasm"/>
    <property type="evidence" value="ECO:0007669"/>
    <property type="project" value="UniProtKB-SubCell"/>
</dbReference>
<dbReference type="GO" id="GO:0002953">
    <property type="term" value="F:5'-deoxynucleotidase activity"/>
    <property type="evidence" value="ECO:0007669"/>
    <property type="project" value="UniProtKB-EC"/>
</dbReference>
<dbReference type="GO" id="GO:0046872">
    <property type="term" value="F:metal ion binding"/>
    <property type="evidence" value="ECO:0007669"/>
    <property type="project" value="UniProtKB-KW"/>
</dbReference>
<dbReference type="GO" id="GO:0000166">
    <property type="term" value="F:nucleotide binding"/>
    <property type="evidence" value="ECO:0007669"/>
    <property type="project" value="UniProtKB-KW"/>
</dbReference>
<dbReference type="CDD" id="cd00077">
    <property type="entry name" value="HDc"/>
    <property type="match status" value="1"/>
</dbReference>
<dbReference type="FunFam" id="1.10.3210.10:FF:000002">
    <property type="entry name" value="Nucleotidase YfbR"/>
    <property type="match status" value="1"/>
</dbReference>
<dbReference type="Gene3D" id="1.10.3210.10">
    <property type="entry name" value="Hypothetical protein af1432"/>
    <property type="match status" value="1"/>
</dbReference>
<dbReference type="HAMAP" id="MF_01100">
    <property type="entry name" value="5DNU"/>
    <property type="match status" value="1"/>
</dbReference>
<dbReference type="InterPro" id="IPR003607">
    <property type="entry name" value="HD/PDEase_dom"/>
</dbReference>
<dbReference type="InterPro" id="IPR006674">
    <property type="entry name" value="HD_domain"/>
</dbReference>
<dbReference type="InterPro" id="IPR022971">
    <property type="entry name" value="YfbR"/>
</dbReference>
<dbReference type="InterPro" id="IPR039356">
    <property type="entry name" value="YfbR/HDDC2"/>
</dbReference>
<dbReference type="NCBIfam" id="NF003009">
    <property type="entry name" value="PRK03826.1"/>
    <property type="match status" value="1"/>
</dbReference>
<dbReference type="PANTHER" id="PTHR11845">
    <property type="entry name" value="5'-DEOXYNUCLEOTIDASE HDDC2"/>
    <property type="match status" value="1"/>
</dbReference>
<dbReference type="PANTHER" id="PTHR11845:SF13">
    <property type="entry name" value="5'-DEOXYNUCLEOTIDASE HDDC2"/>
    <property type="match status" value="1"/>
</dbReference>
<dbReference type="Pfam" id="PF12917">
    <property type="entry name" value="YfbR-like"/>
    <property type="match status" value="1"/>
</dbReference>
<dbReference type="SMART" id="SM00471">
    <property type="entry name" value="HDc"/>
    <property type="match status" value="1"/>
</dbReference>
<dbReference type="SUPFAM" id="SSF109604">
    <property type="entry name" value="HD-domain/PDEase-like"/>
    <property type="match status" value="1"/>
</dbReference>
<dbReference type="PROSITE" id="PS51831">
    <property type="entry name" value="HD"/>
    <property type="match status" value="1"/>
</dbReference>
<organism>
    <name type="scientific">Escherichia coli (strain 55989 / EAEC)</name>
    <dbReference type="NCBI Taxonomy" id="585055"/>
    <lineage>
        <taxon>Bacteria</taxon>
        <taxon>Pseudomonadati</taxon>
        <taxon>Pseudomonadota</taxon>
        <taxon>Gammaproteobacteria</taxon>
        <taxon>Enterobacterales</taxon>
        <taxon>Enterobacteriaceae</taxon>
        <taxon>Escherichia</taxon>
    </lineage>
</organism>
<feature type="chain" id="PRO_1000149895" description="5'-deoxynucleotidase YfbR">
    <location>
        <begin position="1"/>
        <end position="199"/>
    </location>
</feature>
<feature type="domain" description="HD" evidence="2">
    <location>
        <begin position="30"/>
        <end position="142"/>
    </location>
</feature>
<feature type="binding site" evidence="1">
    <location>
        <begin position="18"/>
        <end position="19"/>
    </location>
    <ligand>
        <name>substrate</name>
    </ligand>
</feature>
<feature type="binding site" evidence="1">
    <location>
        <position position="33"/>
    </location>
    <ligand>
        <name>a divalent metal cation</name>
        <dbReference type="ChEBI" id="CHEBI:60240"/>
    </ligand>
</feature>
<feature type="binding site" evidence="1">
    <location>
        <position position="33"/>
    </location>
    <ligand>
        <name>substrate</name>
    </ligand>
</feature>
<feature type="binding site" evidence="1">
    <location>
        <position position="68"/>
    </location>
    <ligand>
        <name>a divalent metal cation</name>
        <dbReference type="ChEBI" id="CHEBI:60240"/>
    </ligand>
</feature>
<feature type="binding site" evidence="1">
    <location>
        <position position="69"/>
    </location>
    <ligand>
        <name>a divalent metal cation</name>
        <dbReference type="ChEBI" id="CHEBI:60240"/>
    </ligand>
</feature>
<feature type="binding site" evidence="1">
    <location>
        <position position="69"/>
    </location>
    <ligand>
        <name>substrate</name>
    </ligand>
</feature>
<feature type="binding site" evidence="1">
    <location>
        <begin position="77"/>
        <end position="80"/>
    </location>
    <ligand>
        <name>substrate</name>
    </ligand>
</feature>
<feature type="binding site" evidence="1">
    <location>
        <position position="137"/>
    </location>
    <ligand>
        <name>a divalent metal cation</name>
        <dbReference type="ChEBI" id="CHEBI:60240"/>
    </ligand>
</feature>
<feature type="binding site" evidence="1">
    <location>
        <position position="137"/>
    </location>
    <ligand>
        <name>substrate</name>
    </ligand>
</feature>
<feature type="site" description="Appears to be important in orienting the phosphate for catalysis" evidence="1">
    <location>
        <position position="18"/>
    </location>
</feature>
<name>5DNU_ECO55</name>